<comment type="subcellular location">
    <subcellularLocation>
        <location evidence="1">Cytoplasm</location>
    </subcellularLocation>
</comment>
<comment type="similarity">
    <text evidence="1">Belongs to the TACO1 family. YeeN subfamily.</text>
</comment>
<name>Y231_STRP3</name>
<keyword id="KW-0963">Cytoplasm</keyword>
<keyword id="KW-0238">DNA-binding</keyword>
<keyword id="KW-0804">Transcription</keyword>
<keyword id="KW-0805">Transcription regulation</keyword>
<reference key="1">
    <citation type="journal article" date="2002" name="Proc. Natl. Acad. Sci. U.S.A.">
        <title>Genome sequence of a serotype M3 strain of group A Streptococcus: phage-encoded toxins, the high-virulence phenotype, and clone emergence.</title>
        <authorList>
            <person name="Beres S.B."/>
            <person name="Sylva G.L."/>
            <person name="Barbian K.D."/>
            <person name="Lei B."/>
            <person name="Hoff J.S."/>
            <person name="Mammarella N.D."/>
            <person name="Liu M.-Y."/>
            <person name="Smoot J.C."/>
            <person name="Porcella S.F."/>
            <person name="Parkins L.D."/>
            <person name="Campbell D.S."/>
            <person name="Smith T.M."/>
            <person name="McCormick J.K."/>
            <person name="Leung D.Y.M."/>
            <person name="Schlievert P.M."/>
            <person name="Musser J.M."/>
        </authorList>
    </citation>
    <scope>NUCLEOTIDE SEQUENCE [LARGE SCALE GENOMIC DNA]</scope>
    <source>
        <strain>ATCC BAA-595 / MGAS315</strain>
    </source>
</reference>
<accession>P0DF82</accession>
<accession>P67189</accession>
<accession>Q9A1E6</accession>
<evidence type="ECO:0000255" key="1">
    <source>
        <dbReference type="HAMAP-Rule" id="MF_00918"/>
    </source>
</evidence>
<organism>
    <name type="scientific">Streptococcus pyogenes serotype M3 (strain ATCC BAA-595 / MGAS315)</name>
    <dbReference type="NCBI Taxonomy" id="198466"/>
    <lineage>
        <taxon>Bacteria</taxon>
        <taxon>Bacillati</taxon>
        <taxon>Bacillota</taxon>
        <taxon>Bacilli</taxon>
        <taxon>Lactobacillales</taxon>
        <taxon>Streptococcaceae</taxon>
        <taxon>Streptococcus</taxon>
    </lineage>
</organism>
<dbReference type="EMBL" id="AE014074">
    <property type="protein sequence ID" value="AAM78838.1"/>
    <property type="molecule type" value="Genomic_DNA"/>
</dbReference>
<dbReference type="RefSeq" id="WP_002985979.1">
    <property type="nucleotide sequence ID" value="NC_004070.1"/>
</dbReference>
<dbReference type="SMR" id="P0DF82"/>
<dbReference type="KEGG" id="spg:SpyM3_0231"/>
<dbReference type="HOGENOM" id="CLU_062974_2_0_9"/>
<dbReference type="Proteomes" id="UP000000564">
    <property type="component" value="Chromosome"/>
</dbReference>
<dbReference type="GO" id="GO:0005829">
    <property type="term" value="C:cytosol"/>
    <property type="evidence" value="ECO:0007669"/>
    <property type="project" value="TreeGrafter"/>
</dbReference>
<dbReference type="GO" id="GO:0003677">
    <property type="term" value="F:DNA binding"/>
    <property type="evidence" value="ECO:0007669"/>
    <property type="project" value="UniProtKB-UniRule"/>
</dbReference>
<dbReference type="GO" id="GO:0006355">
    <property type="term" value="P:regulation of DNA-templated transcription"/>
    <property type="evidence" value="ECO:0007669"/>
    <property type="project" value="UniProtKB-UniRule"/>
</dbReference>
<dbReference type="FunFam" id="1.10.10.200:FF:000003">
    <property type="entry name" value="Probable transcriptional regulatory protein YeeN"/>
    <property type="match status" value="1"/>
</dbReference>
<dbReference type="FunFam" id="3.30.70.980:FF:000004">
    <property type="entry name" value="Probable transcriptional regulatory protein YeeN"/>
    <property type="match status" value="1"/>
</dbReference>
<dbReference type="Gene3D" id="1.10.10.200">
    <property type="match status" value="1"/>
</dbReference>
<dbReference type="Gene3D" id="3.30.70.980">
    <property type="match status" value="2"/>
</dbReference>
<dbReference type="HAMAP" id="MF_00693">
    <property type="entry name" value="Transcrip_reg_TACO1"/>
    <property type="match status" value="1"/>
</dbReference>
<dbReference type="HAMAP" id="MF_00918">
    <property type="entry name" value="Transcrip_reg_TACO1_YeeN"/>
    <property type="match status" value="1"/>
</dbReference>
<dbReference type="InterPro" id="IPR017856">
    <property type="entry name" value="Integrase-like_N"/>
</dbReference>
<dbReference type="InterPro" id="IPR048300">
    <property type="entry name" value="TACO1_YebC-like_2nd/3rd_dom"/>
</dbReference>
<dbReference type="InterPro" id="IPR049083">
    <property type="entry name" value="TACO1_YebC_N"/>
</dbReference>
<dbReference type="InterPro" id="IPR002876">
    <property type="entry name" value="Transcrip_reg_TACO1-like"/>
</dbReference>
<dbReference type="InterPro" id="IPR026564">
    <property type="entry name" value="Transcrip_reg_TACO1-like_dom3"/>
</dbReference>
<dbReference type="InterPro" id="IPR026562">
    <property type="entry name" value="Transcrip_reg_TACO1_YeeN"/>
</dbReference>
<dbReference type="InterPro" id="IPR029072">
    <property type="entry name" value="YebC-like"/>
</dbReference>
<dbReference type="NCBIfam" id="NF001030">
    <property type="entry name" value="PRK00110.1"/>
    <property type="match status" value="1"/>
</dbReference>
<dbReference type="NCBIfam" id="NF009044">
    <property type="entry name" value="PRK12378.1"/>
    <property type="match status" value="1"/>
</dbReference>
<dbReference type="NCBIfam" id="TIGR01033">
    <property type="entry name" value="YebC/PmpR family DNA-binding transcriptional regulator"/>
    <property type="match status" value="1"/>
</dbReference>
<dbReference type="PANTHER" id="PTHR12532">
    <property type="entry name" value="TRANSLATIONAL ACTIVATOR OF CYTOCHROME C OXIDASE 1"/>
    <property type="match status" value="1"/>
</dbReference>
<dbReference type="PANTHER" id="PTHR12532:SF0">
    <property type="entry name" value="TRANSLATIONAL ACTIVATOR OF CYTOCHROME C OXIDASE 1"/>
    <property type="match status" value="1"/>
</dbReference>
<dbReference type="Pfam" id="PF20772">
    <property type="entry name" value="TACO1_YebC_N"/>
    <property type="match status" value="1"/>
</dbReference>
<dbReference type="Pfam" id="PF01709">
    <property type="entry name" value="Transcrip_reg"/>
    <property type="match status" value="1"/>
</dbReference>
<dbReference type="SUPFAM" id="SSF75625">
    <property type="entry name" value="YebC-like"/>
    <property type="match status" value="1"/>
</dbReference>
<feature type="chain" id="PRO_0000175907" description="Probable transcriptional regulatory protein SpyM3_0231">
    <location>
        <begin position="1"/>
        <end position="238"/>
    </location>
</feature>
<protein>
    <recommendedName>
        <fullName evidence="1">Probable transcriptional regulatory protein SpyM3_0231</fullName>
    </recommendedName>
</protein>
<sequence length="238" mass="25888">MGRKWANIVAKKTAKDGATSKVYAKFGVEIYVAAKQGEPDPELNTALKFVIDRAKQAQVPKHVIDKAIDKAKGNTDETFVEGRYEGFGPNGSMIIVDTLTSNVNRTAANVRTAYGKNGGNMGASGSVSYLFDKKGVIVFAGDDADSVFEQLLEADVDVDDVEAEEGTITVYTAPTDLHKGIQALRDNGVEEFQVTELEMIPQSEVVLEGDDLETFEKLIDALESDDDVQKVYHNVADF</sequence>
<proteinExistence type="inferred from homology"/>
<gene>
    <name type="ordered locus">SpyM3_0231</name>
</gene>